<proteinExistence type="inferred from homology"/>
<accession>Q9JV26</accession>
<accession>A1IR60</accession>
<dbReference type="EMBL" id="AL157959">
    <property type="protein sequence ID" value="CAM08244.1"/>
    <property type="molecule type" value="Genomic_DNA"/>
</dbReference>
<dbReference type="PIR" id="E81950">
    <property type="entry name" value="E81950"/>
</dbReference>
<dbReference type="RefSeq" id="WP_002222699.1">
    <property type="nucleotide sequence ID" value="NC_003116.1"/>
</dbReference>
<dbReference type="SMR" id="Q9JV26"/>
<dbReference type="EnsemblBacteria" id="CAM08244">
    <property type="protein sequence ID" value="CAM08244"/>
    <property type="gene ID" value="NMA1023"/>
</dbReference>
<dbReference type="KEGG" id="nma:NMA1023"/>
<dbReference type="HOGENOM" id="CLU_025113_0_1_4"/>
<dbReference type="UniPathway" id="UPA00031">
    <property type="reaction ID" value="UER00006"/>
</dbReference>
<dbReference type="Proteomes" id="UP000000626">
    <property type="component" value="Chromosome"/>
</dbReference>
<dbReference type="GO" id="GO:0005737">
    <property type="term" value="C:cytoplasm"/>
    <property type="evidence" value="ECO:0007669"/>
    <property type="project" value="UniProtKB-SubCell"/>
</dbReference>
<dbReference type="GO" id="GO:0004821">
    <property type="term" value="F:histidine-tRNA ligase activity"/>
    <property type="evidence" value="ECO:0007669"/>
    <property type="project" value="TreeGrafter"/>
</dbReference>
<dbReference type="GO" id="GO:0006427">
    <property type="term" value="P:histidyl-tRNA aminoacylation"/>
    <property type="evidence" value="ECO:0007669"/>
    <property type="project" value="TreeGrafter"/>
</dbReference>
<dbReference type="GO" id="GO:0000105">
    <property type="term" value="P:L-histidine biosynthetic process"/>
    <property type="evidence" value="ECO:0007669"/>
    <property type="project" value="UniProtKB-UniRule"/>
</dbReference>
<dbReference type="FunFam" id="3.30.930.10:FF:000096">
    <property type="entry name" value="ATP phosphoribosyltransferase regulatory subunit"/>
    <property type="match status" value="1"/>
</dbReference>
<dbReference type="Gene3D" id="3.30.930.10">
    <property type="entry name" value="Bira Bifunctional Protein, Domain 2"/>
    <property type="match status" value="1"/>
</dbReference>
<dbReference type="HAMAP" id="MF_00125">
    <property type="entry name" value="HisZ"/>
    <property type="match status" value="1"/>
</dbReference>
<dbReference type="InterPro" id="IPR045864">
    <property type="entry name" value="aa-tRNA-synth_II/BPL/LPL"/>
</dbReference>
<dbReference type="InterPro" id="IPR041715">
    <property type="entry name" value="HisRS-like_core"/>
</dbReference>
<dbReference type="InterPro" id="IPR004516">
    <property type="entry name" value="HisRS/HisZ"/>
</dbReference>
<dbReference type="InterPro" id="IPR004517">
    <property type="entry name" value="HisZ"/>
</dbReference>
<dbReference type="NCBIfam" id="NF008935">
    <property type="entry name" value="PRK12292.1-1"/>
    <property type="match status" value="1"/>
</dbReference>
<dbReference type="NCBIfam" id="NF009086">
    <property type="entry name" value="PRK12421.1"/>
    <property type="match status" value="1"/>
</dbReference>
<dbReference type="PANTHER" id="PTHR43707:SF1">
    <property type="entry name" value="HISTIDINE--TRNA LIGASE, MITOCHONDRIAL-RELATED"/>
    <property type="match status" value="1"/>
</dbReference>
<dbReference type="PANTHER" id="PTHR43707">
    <property type="entry name" value="HISTIDYL-TRNA SYNTHETASE"/>
    <property type="match status" value="1"/>
</dbReference>
<dbReference type="Pfam" id="PF13393">
    <property type="entry name" value="tRNA-synt_His"/>
    <property type="match status" value="1"/>
</dbReference>
<dbReference type="PIRSF" id="PIRSF001549">
    <property type="entry name" value="His-tRNA_synth"/>
    <property type="match status" value="1"/>
</dbReference>
<dbReference type="SUPFAM" id="SSF55681">
    <property type="entry name" value="Class II aaRS and biotin synthetases"/>
    <property type="match status" value="1"/>
</dbReference>
<sequence length="383" mass="41838">MQTWQLPEHIADVLPTNARQLESAREQLLALFRVHGYELVQPPLMEYAHSLLTHIDAGLSLKTILVTDRLSGRQLGIRADITPQVARIDAHLLSANQGINRLCYAGPVLHAQSDGLLNMREPLQAGAEMYGFADIRGDIELIDLMLKSMKIADMGKVLLSLGHIGIFRALSDAAHLDAGQSATLLALMQDKDTETVEAQVKAWKLDGMWAKAFSLLPRLYGGREVLSDARGRLPDLSAVGGALGELQAVCDAFPDCEIHIDLSELRVDNYHTGLLYAAYAADFHDAVARGGRYDGLGGYFGRARPATGFSFDLRSFIGRLPAIERQPAVLVDAEDAEAAHEAVEALREQGQCVVIDYGIGHNVSEELAGRLKKTDGVWQVVKR</sequence>
<comment type="function">
    <text evidence="1">Required for the first step of histidine biosynthesis. May allow the feedback regulation of ATP phosphoribosyltransferase activity by histidine (By similarity).</text>
</comment>
<comment type="pathway">
    <text>Amino-acid biosynthesis; L-histidine biosynthesis; L-histidine from 5-phospho-alpha-D-ribose 1-diphosphate: step 1/9.</text>
</comment>
<comment type="subunit">
    <text evidence="1">Heteromultimer composed of HisG and HisZ subunits.</text>
</comment>
<comment type="subcellular location">
    <subcellularLocation>
        <location evidence="1">Cytoplasm</location>
    </subcellularLocation>
</comment>
<comment type="miscellaneous">
    <text>This function is generally fulfilled by the C-terminal part of HisG, which is missing in some bacteria such as this one.</text>
</comment>
<comment type="similarity">
    <text evidence="2">Belongs to the class-II aminoacyl-tRNA synthetase family. HisZ subfamily.</text>
</comment>
<reference key="1">
    <citation type="journal article" date="2000" name="Nature">
        <title>Complete DNA sequence of a serogroup A strain of Neisseria meningitidis Z2491.</title>
        <authorList>
            <person name="Parkhill J."/>
            <person name="Achtman M."/>
            <person name="James K.D."/>
            <person name="Bentley S.D."/>
            <person name="Churcher C.M."/>
            <person name="Klee S.R."/>
            <person name="Morelli G."/>
            <person name="Basham D."/>
            <person name="Brown D."/>
            <person name="Chillingworth T."/>
            <person name="Davies R.M."/>
            <person name="Davis P."/>
            <person name="Devlin K."/>
            <person name="Feltwell T."/>
            <person name="Hamlin N."/>
            <person name="Holroyd S."/>
            <person name="Jagels K."/>
            <person name="Leather S."/>
            <person name="Moule S."/>
            <person name="Mungall K.L."/>
            <person name="Quail M.A."/>
            <person name="Rajandream M.A."/>
            <person name="Rutherford K.M."/>
            <person name="Simmonds M."/>
            <person name="Skelton J."/>
            <person name="Whitehead S."/>
            <person name="Spratt B.G."/>
            <person name="Barrell B.G."/>
        </authorList>
    </citation>
    <scope>NUCLEOTIDE SEQUENCE [LARGE SCALE GENOMIC DNA]</scope>
    <source>
        <strain>DSM 15465 / Z2491</strain>
    </source>
</reference>
<organism>
    <name type="scientific">Neisseria meningitidis serogroup A / serotype 4A (strain DSM 15465 / Z2491)</name>
    <dbReference type="NCBI Taxonomy" id="122587"/>
    <lineage>
        <taxon>Bacteria</taxon>
        <taxon>Pseudomonadati</taxon>
        <taxon>Pseudomonadota</taxon>
        <taxon>Betaproteobacteria</taxon>
        <taxon>Neisseriales</taxon>
        <taxon>Neisseriaceae</taxon>
        <taxon>Neisseria</taxon>
    </lineage>
</organism>
<name>HISZ_NEIMA</name>
<keyword id="KW-0028">Amino-acid biosynthesis</keyword>
<keyword id="KW-0963">Cytoplasm</keyword>
<keyword id="KW-0368">Histidine biosynthesis</keyword>
<feature type="chain" id="PRO_0000171045" description="ATP phosphoribosyltransferase regulatory subunit">
    <location>
        <begin position="1"/>
        <end position="383"/>
    </location>
</feature>
<gene>
    <name type="primary">hisZ</name>
    <name type="ordered locus">NMA1023</name>
</gene>
<protein>
    <recommendedName>
        <fullName>ATP phosphoribosyltransferase regulatory subunit</fullName>
    </recommendedName>
</protein>
<evidence type="ECO:0000250" key="1"/>
<evidence type="ECO:0000305" key="2"/>